<keyword id="KW-0112">Calmodulin-binding</keyword>
<keyword id="KW-0210">Decarboxylase</keyword>
<keyword id="KW-0456">Lyase</keyword>
<keyword id="KW-0663">Pyridoxal phosphate</keyword>
<keyword id="KW-1185">Reference proteome</keyword>
<protein>
    <recommendedName>
        <fullName>Glutamate decarboxylase</fullName>
        <shortName>GAD</shortName>
        <ecNumber>4.1.1.15</ecNumber>
    </recommendedName>
    <alternativeName>
        <fullName>ERT D1</fullName>
    </alternativeName>
</protein>
<feature type="chain" id="PRO_0000146975" description="Glutamate decarboxylase">
    <location>
        <begin position="1"/>
        <end position="502"/>
    </location>
</feature>
<feature type="region of interest" description="Calmodulin-binding" evidence="1">
    <location>
        <begin position="471"/>
        <end position="502"/>
    </location>
</feature>
<feature type="modified residue" description="N6-(pyridoxal phosphate)lysine" evidence="1">
    <location>
        <position position="278"/>
    </location>
</feature>
<proteinExistence type="evidence at transcript level"/>
<sequence>MVLTTTSIRDSEESLHCTFASRYVQEPLPKFKMPKKSMPKEAAYQIVNDELMLDGNPRLNLASFVSTWMEPECDKLIMSSINKNYVDMDEYPVTTELQNRCVNMLAHLFHAPVGDDETAVGVGTVGSSEAIMLAGLAFKRKWQSKRKAEGKPFDKPNIVTGANVQVCWEKFARYFEVELKEVKLKEGYYVMDPAKAVEIVDENTICVAAILGSTLTGEFEDVKLLNELLTKKNKETGWETPIHVDAASGGFIAPFLWPDLEWDFRLPLVKSINVSGHKYGLVYAGVGWVIWRSKEDLPDELVFHINYLGSDQPTFTLNFSKGSYQIIAQYYQLIRLGFEGYKNVMKNCLSNAKVLTEGITKMGRFDIVSKDVGVPVVAFSLRDSSKYTVFEVSEHLRRFGWIVPAYTMPPDAEHIAVLRVVIREDFSHSLAERLVSDIEKILSELDTQPPRLPTKAVRVTAEEVRDDKGDGLHHFHMDTVETQKDIIKHWRKIAGKKTSGVC</sequence>
<evidence type="ECO:0000250" key="1"/>
<evidence type="ECO:0000305" key="2"/>
<organism>
    <name type="scientific">Solanum lycopersicum</name>
    <name type="common">Tomato</name>
    <name type="synonym">Lycopersicon esculentum</name>
    <dbReference type="NCBI Taxonomy" id="4081"/>
    <lineage>
        <taxon>Eukaryota</taxon>
        <taxon>Viridiplantae</taxon>
        <taxon>Streptophyta</taxon>
        <taxon>Embryophyta</taxon>
        <taxon>Tracheophyta</taxon>
        <taxon>Spermatophyta</taxon>
        <taxon>Magnoliopsida</taxon>
        <taxon>eudicotyledons</taxon>
        <taxon>Gunneridae</taxon>
        <taxon>Pentapetalae</taxon>
        <taxon>asterids</taxon>
        <taxon>lamiids</taxon>
        <taxon>Solanales</taxon>
        <taxon>Solanaceae</taxon>
        <taxon>Solanoideae</taxon>
        <taxon>Solaneae</taxon>
        <taxon>Solanum</taxon>
        <taxon>Solanum subgen. Lycopersicon</taxon>
    </lineage>
</organism>
<comment type="function">
    <text evidence="1">Catalyzes the production of GABA. The calmodulin-binding is calcium-dependent and it is proposed that this may, directly or indirectly, form a calcium regulated control of GABA biosynthesis (By similarity).</text>
</comment>
<comment type="catalytic activity">
    <reaction>
        <text>L-glutamate + H(+) = 4-aminobutanoate + CO2</text>
        <dbReference type="Rhea" id="RHEA:17785"/>
        <dbReference type="ChEBI" id="CHEBI:15378"/>
        <dbReference type="ChEBI" id="CHEBI:16526"/>
        <dbReference type="ChEBI" id="CHEBI:29985"/>
        <dbReference type="ChEBI" id="CHEBI:59888"/>
        <dbReference type="EC" id="4.1.1.15"/>
    </reaction>
</comment>
<comment type="cofactor">
    <cofactor>
        <name>pyridoxal 5'-phosphate</name>
        <dbReference type="ChEBI" id="CHEBI:597326"/>
    </cofactor>
</comment>
<comment type="similarity">
    <text evidence="2">Belongs to the group II decarboxylase family.</text>
</comment>
<name>DCE_SOLLC</name>
<dbReference type="EC" id="4.1.1.15"/>
<dbReference type="EMBL" id="X80840">
    <property type="protein sequence ID" value="CAA56812.1"/>
    <property type="molecule type" value="mRNA"/>
</dbReference>
<dbReference type="PIR" id="S56177">
    <property type="entry name" value="S56177"/>
</dbReference>
<dbReference type="SMR" id="P54767"/>
<dbReference type="STRING" id="4081.P54767"/>
<dbReference type="PaxDb" id="4081-Solyc03g098240.2.1"/>
<dbReference type="ProMEX" id="P54767"/>
<dbReference type="eggNOG" id="KOG1383">
    <property type="taxonomic scope" value="Eukaryota"/>
</dbReference>
<dbReference type="InParanoid" id="P54767"/>
<dbReference type="BioCyc" id="MetaCyc:MONOMER-15560"/>
<dbReference type="Proteomes" id="UP000004994">
    <property type="component" value="Unplaced"/>
</dbReference>
<dbReference type="ExpressionAtlas" id="P54767">
    <property type="expression patterns" value="baseline and differential"/>
</dbReference>
<dbReference type="GO" id="GO:0005829">
    <property type="term" value="C:cytosol"/>
    <property type="evidence" value="ECO:0000318"/>
    <property type="project" value="GO_Central"/>
</dbReference>
<dbReference type="GO" id="GO:0005516">
    <property type="term" value="F:calmodulin binding"/>
    <property type="evidence" value="ECO:0007669"/>
    <property type="project" value="UniProtKB-KW"/>
</dbReference>
<dbReference type="GO" id="GO:0004351">
    <property type="term" value="F:glutamate decarboxylase activity"/>
    <property type="evidence" value="ECO:0000318"/>
    <property type="project" value="GO_Central"/>
</dbReference>
<dbReference type="GO" id="GO:0030170">
    <property type="term" value="F:pyridoxal phosphate binding"/>
    <property type="evidence" value="ECO:0007669"/>
    <property type="project" value="InterPro"/>
</dbReference>
<dbReference type="GO" id="GO:0006538">
    <property type="term" value="P:glutamate catabolic process"/>
    <property type="evidence" value="ECO:0000318"/>
    <property type="project" value="GO_Central"/>
</dbReference>
<dbReference type="CDD" id="cd06450">
    <property type="entry name" value="DOPA_deC_like"/>
    <property type="match status" value="1"/>
</dbReference>
<dbReference type="FunFam" id="3.40.640.10:FF:000022">
    <property type="entry name" value="Glutamate decarboxylase"/>
    <property type="match status" value="1"/>
</dbReference>
<dbReference type="FunFam" id="3.90.1150.160:FF:000001">
    <property type="entry name" value="Glutamate decarboxylase"/>
    <property type="match status" value="1"/>
</dbReference>
<dbReference type="FunFam" id="4.10.280.50:FF:000002">
    <property type="entry name" value="Glutamate decarboxylase"/>
    <property type="match status" value="1"/>
</dbReference>
<dbReference type="Gene3D" id="3.90.1150.160">
    <property type="match status" value="1"/>
</dbReference>
<dbReference type="Gene3D" id="4.10.280.50">
    <property type="match status" value="1"/>
</dbReference>
<dbReference type="Gene3D" id="3.40.640.10">
    <property type="entry name" value="Type I PLP-dependent aspartate aminotransferase-like (Major domain)"/>
    <property type="match status" value="1"/>
</dbReference>
<dbReference type="InterPro" id="IPR010107">
    <property type="entry name" value="Glutamate_decarboxylase"/>
</dbReference>
<dbReference type="InterPro" id="IPR002129">
    <property type="entry name" value="PyrdxlP-dep_de-COase"/>
</dbReference>
<dbReference type="InterPro" id="IPR015424">
    <property type="entry name" value="PyrdxlP-dep_Trfase"/>
</dbReference>
<dbReference type="InterPro" id="IPR015421">
    <property type="entry name" value="PyrdxlP-dep_Trfase_major"/>
</dbReference>
<dbReference type="NCBIfam" id="TIGR01788">
    <property type="entry name" value="Glu-decarb-GAD"/>
    <property type="match status" value="1"/>
</dbReference>
<dbReference type="PANTHER" id="PTHR43321">
    <property type="entry name" value="GLUTAMATE DECARBOXYLASE"/>
    <property type="match status" value="1"/>
</dbReference>
<dbReference type="PANTHER" id="PTHR43321:SF37">
    <property type="entry name" value="GLUTAMATE DECARBOXYLASE"/>
    <property type="match status" value="1"/>
</dbReference>
<dbReference type="Pfam" id="PF00282">
    <property type="entry name" value="Pyridoxal_deC"/>
    <property type="match status" value="1"/>
</dbReference>
<dbReference type="SUPFAM" id="SSF53383">
    <property type="entry name" value="PLP-dependent transferases"/>
    <property type="match status" value="1"/>
</dbReference>
<reference key="1">
    <citation type="journal article" date="1995" name="Plant Mol. Biol.">
        <title>A role for glutamate decarboxylase during tomato ripening: the characterisation of a cDNA encoding a putative glutamate decarboxylase with a calmodulin-binding site.</title>
        <authorList>
            <person name="Gallego P.P."/>
            <person name="Whotton L."/>
            <person name="Picton S."/>
            <person name="Grierson D."/>
            <person name="Gray J.E."/>
        </authorList>
    </citation>
    <scope>NUCLEOTIDE SEQUENCE [MRNA]</scope>
    <source>
        <strain>cv. Ailsa Craig</strain>
        <tissue>Pericarp</tissue>
    </source>
</reference>
<accession>P54767</accession>